<organism>
    <name type="scientific">Helicobacter pylori (strain ATCC 700392 / 26695)</name>
    <name type="common">Campylobacter pylori</name>
    <dbReference type="NCBI Taxonomy" id="85962"/>
    <lineage>
        <taxon>Bacteria</taxon>
        <taxon>Pseudomonadati</taxon>
        <taxon>Campylobacterota</taxon>
        <taxon>Epsilonproteobacteria</taxon>
        <taxon>Campylobacterales</taxon>
        <taxon>Helicobacteraceae</taxon>
        <taxon>Helicobacter</taxon>
    </lineage>
</organism>
<sequence>MIIERLVGNLRDLNPLDFSVDHVDLEWFETRKKIARFKTRQGKDIAIRLKDAPKLGLSQGDILFKEEKEIIAVNILDSEVIHIQAKSVAEVAKICYEIGNRHAALYYGESQFEFKTPFEKPTLALLEKLGVQNRVLSSKLDSKERLTVSMPHSEPNFKVSLASDFKVVVK</sequence>
<comment type="function">
    <text evidence="1">Involved in urease metallocenter assembly. Binds nickel. Probably functions as a nickel donor during metallocenter assembly.</text>
</comment>
<comment type="interaction">
    <interactant intactId="EBI-7742396">
        <id>Q09064</id>
    </interactant>
    <interactant intactId="EBI-7742750">
        <id>Q09066</id>
        <label>ureG</label>
    </interactant>
    <organismsDiffer>false</organismsDiffer>
    <experiments>3</experiments>
</comment>
<comment type="subcellular location">
    <subcellularLocation>
        <location>Cytoplasm</location>
    </subcellularLocation>
</comment>
<comment type="similarity">
    <text evidence="1">Belongs to the UreE family.</text>
</comment>
<keyword id="KW-0002">3D-structure</keyword>
<keyword id="KW-0143">Chaperone</keyword>
<keyword id="KW-0963">Cytoplasm</keyword>
<keyword id="KW-0533">Nickel</keyword>
<keyword id="KW-0996">Nickel insertion</keyword>
<keyword id="KW-1185">Reference proteome</keyword>
<keyword id="KW-0843">Virulence</keyword>
<dbReference type="EMBL" id="M84338">
    <property type="protein sequence ID" value="AAA25023.1"/>
    <property type="molecule type" value="Genomic_DNA"/>
</dbReference>
<dbReference type="EMBL" id="AE000511">
    <property type="protein sequence ID" value="AAD07133.1"/>
    <property type="molecule type" value="Genomic_DNA"/>
</dbReference>
<dbReference type="PIR" id="B41834">
    <property type="entry name" value="B41834"/>
</dbReference>
<dbReference type="RefSeq" id="NP_206870.1">
    <property type="nucleotide sequence ID" value="NC_000915.1"/>
</dbReference>
<dbReference type="RefSeq" id="WP_000583097.1">
    <property type="nucleotide sequence ID" value="NC_018939.1"/>
</dbReference>
<dbReference type="PDB" id="3L9Z">
    <property type="method" value="X-ray"/>
    <property type="resolution" value="2.08 A"/>
    <property type="chains" value="A=1-170"/>
</dbReference>
<dbReference type="PDB" id="3LA0">
    <property type="method" value="X-ray"/>
    <property type="resolution" value="2.86 A"/>
    <property type="chains" value="A/B/C/D=1-170"/>
</dbReference>
<dbReference type="PDB" id="3NXZ">
    <property type="method" value="X-ray"/>
    <property type="resolution" value="2.70 A"/>
    <property type="chains" value="A/B/C/D=1-170"/>
</dbReference>
<dbReference type="PDB" id="3NY0">
    <property type="method" value="X-ray"/>
    <property type="resolution" value="3.09 A"/>
    <property type="chains" value="A/B/C/D=1-170"/>
</dbReference>
<dbReference type="PDB" id="3TJ8">
    <property type="method" value="X-ray"/>
    <property type="resolution" value="1.59 A"/>
    <property type="chains" value="A/B=1-170"/>
</dbReference>
<dbReference type="PDB" id="3TJ9">
    <property type="method" value="X-ray"/>
    <property type="resolution" value="2.52 A"/>
    <property type="chains" value="A/B/C/D=1-170"/>
</dbReference>
<dbReference type="PDB" id="3TJA">
    <property type="method" value="X-ray"/>
    <property type="resolution" value="2.00 A"/>
    <property type="chains" value="A/B/C/D=1-170"/>
</dbReference>
<dbReference type="PDBsum" id="3L9Z"/>
<dbReference type="PDBsum" id="3LA0"/>
<dbReference type="PDBsum" id="3NXZ"/>
<dbReference type="PDBsum" id="3NY0"/>
<dbReference type="PDBsum" id="3TJ8"/>
<dbReference type="PDBsum" id="3TJ9"/>
<dbReference type="PDBsum" id="3TJA"/>
<dbReference type="SMR" id="Q09064"/>
<dbReference type="DIP" id="DIP-3132N"/>
<dbReference type="IntAct" id="Q09064">
    <property type="interactions" value="1"/>
</dbReference>
<dbReference type="MINT" id="Q09064"/>
<dbReference type="STRING" id="85962.HP_0070"/>
<dbReference type="PaxDb" id="85962-C694_00335"/>
<dbReference type="DNASU" id="898943"/>
<dbReference type="EnsemblBacteria" id="AAD07133">
    <property type="protein sequence ID" value="AAD07133"/>
    <property type="gene ID" value="HP_0070"/>
</dbReference>
<dbReference type="KEGG" id="heo:C694_00335"/>
<dbReference type="KEGG" id="hpy:HP_0070"/>
<dbReference type="PATRIC" id="fig|85962.47.peg.73"/>
<dbReference type="eggNOG" id="COG2371">
    <property type="taxonomic scope" value="Bacteria"/>
</dbReference>
<dbReference type="InParanoid" id="Q09064"/>
<dbReference type="OrthoDB" id="9810882at2"/>
<dbReference type="PhylomeDB" id="Q09064"/>
<dbReference type="BioCyc" id="MetaCyc:HP_RS00355-MONOMER"/>
<dbReference type="EvolutionaryTrace" id="Q09064"/>
<dbReference type="Proteomes" id="UP000000429">
    <property type="component" value="Chromosome"/>
</dbReference>
<dbReference type="GO" id="GO:0005737">
    <property type="term" value="C:cytoplasm"/>
    <property type="evidence" value="ECO:0007669"/>
    <property type="project" value="UniProtKB-SubCell"/>
</dbReference>
<dbReference type="GO" id="GO:0016151">
    <property type="term" value="F:nickel cation binding"/>
    <property type="evidence" value="ECO:0007669"/>
    <property type="project" value="UniProtKB-UniRule"/>
</dbReference>
<dbReference type="GO" id="GO:0051082">
    <property type="term" value="F:unfolded protein binding"/>
    <property type="evidence" value="ECO:0007669"/>
    <property type="project" value="UniProtKB-UniRule"/>
</dbReference>
<dbReference type="GO" id="GO:0006457">
    <property type="term" value="P:protein folding"/>
    <property type="evidence" value="ECO:0007669"/>
    <property type="project" value="InterPro"/>
</dbReference>
<dbReference type="GO" id="GO:0065003">
    <property type="term" value="P:protein-containing complex assembly"/>
    <property type="evidence" value="ECO:0007669"/>
    <property type="project" value="InterPro"/>
</dbReference>
<dbReference type="GO" id="GO:0019627">
    <property type="term" value="P:urea metabolic process"/>
    <property type="evidence" value="ECO:0007669"/>
    <property type="project" value="InterPro"/>
</dbReference>
<dbReference type="CDD" id="cd00571">
    <property type="entry name" value="UreE"/>
    <property type="match status" value="1"/>
</dbReference>
<dbReference type="Gene3D" id="2.60.260.20">
    <property type="entry name" value="Urease metallochaperone UreE, N-terminal domain"/>
    <property type="match status" value="1"/>
</dbReference>
<dbReference type="Gene3D" id="3.30.70.790">
    <property type="entry name" value="UreE, C-terminal domain"/>
    <property type="match status" value="1"/>
</dbReference>
<dbReference type="HAMAP" id="MF_00822">
    <property type="entry name" value="UreE"/>
    <property type="match status" value="1"/>
</dbReference>
<dbReference type="InterPro" id="IPR012406">
    <property type="entry name" value="UreE"/>
</dbReference>
<dbReference type="InterPro" id="IPR007864">
    <property type="entry name" value="UreE_C_dom"/>
</dbReference>
<dbReference type="InterPro" id="IPR004029">
    <property type="entry name" value="UreE_N"/>
</dbReference>
<dbReference type="InterPro" id="IPR036118">
    <property type="entry name" value="UreE_N_sf"/>
</dbReference>
<dbReference type="NCBIfam" id="NF009754">
    <property type="entry name" value="PRK13261.1-6"/>
    <property type="match status" value="1"/>
</dbReference>
<dbReference type="Pfam" id="PF05194">
    <property type="entry name" value="UreE_C"/>
    <property type="match status" value="1"/>
</dbReference>
<dbReference type="Pfam" id="PF02814">
    <property type="entry name" value="UreE_N"/>
    <property type="match status" value="1"/>
</dbReference>
<dbReference type="PIRSF" id="PIRSF036402">
    <property type="entry name" value="Ureas_acces_UreE"/>
    <property type="match status" value="1"/>
</dbReference>
<dbReference type="SMART" id="SM00988">
    <property type="entry name" value="UreE_N"/>
    <property type="match status" value="1"/>
</dbReference>
<dbReference type="SUPFAM" id="SSF69737">
    <property type="entry name" value="Urease metallochaperone UreE, C-terminal domain"/>
    <property type="match status" value="1"/>
</dbReference>
<dbReference type="SUPFAM" id="SSF69287">
    <property type="entry name" value="Urease metallochaperone UreE, N-terminal domain"/>
    <property type="match status" value="1"/>
</dbReference>
<evidence type="ECO:0000255" key="1">
    <source>
        <dbReference type="HAMAP-Rule" id="MF_00822"/>
    </source>
</evidence>
<evidence type="ECO:0000305" key="2"/>
<evidence type="ECO:0007829" key="3">
    <source>
        <dbReference type="PDB" id="3TJ8"/>
    </source>
</evidence>
<evidence type="ECO:0007829" key="4">
    <source>
        <dbReference type="PDB" id="3TJ9"/>
    </source>
</evidence>
<reference key="1">
    <citation type="journal article" date="1992" name="J. Bacteriol.">
        <title>Expression of Helicobacter pylori urease genes in Escherichia coli grown under nitrogen-limiting conditions.</title>
        <authorList>
            <person name="Cussac V."/>
            <person name="Ferrero R.L."/>
            <person name="Labigne A."/>
        </authorList>
    </citation>
    <scope>NUCLEOTIDE SEQUENCE [GENOMIC DNA]</scope>
    <source>
        <strain>85P</strain>
    </source>
</reference>
<reference key="2">
    <citation type="journal article" date="1997" name="Nature">
        <title>The complete genome sequence of the gastric pathogen Helicobacter pylori.</title>
        <authorList>
            <person name="Tomb J.-F."/>
            <person name="White O."/>
            <person name="Kerlavage A.R."/>
            <person name="Clayton R.A."/>
            <person name="Sutton G.G."/>
            <person name="Fleischmann R.D."/>
            <person name="Ketchum K.A."/>
            <person name="Klenk H.-P."/>
            <person name="Gill S.R."/>
            <person name="Dougherty B.A."/>
            <person name="Nelson K.E."/>
            <person name="Quackenbush J."/>
            <person name="Zhou L."/>
            <person name="Kirkness E.F."/>
            <person name="Peterson S.N."/>
            <person name="Loftus B.J."/>
            <person name="Richardson D.L."/>
            <person name="Dodson R.J."/>
            <person name="Khalak H.G."/>
            <person name="Glodek A."/>
            <person name="McKenney K."/>
            <person name="FitzGerald L.M."/>
            <person name="Lee N."/>
            <person name="Adams M.D."/>
            <person name="Hickey E.K."/>
            <person name="Berg D.E."/>
            <person name="Gocayne J.D."/>
            <person name="Utterback T.R."/>
            <person name="Peterson J.D."/>
            <person name="Kelley J.M."/>
            <person name="Cotton M.D."/>
            <person name="Weidman J.F."/>
            <person name="Fujii C."/>
            <person name="Bowman C."/>
            <person name="Watthey L."/>
            <person name="Wallin E."/>
            <person name="Hayes W.S."/>
            <person name="Borodovsky M."/>
            <person name="Karp P.D."/>
            <person name="Smith H.O."/>
            <person name="Fraser C.M."/>
            <person name="Venter J.C."/>
        </authorList>
    </citation>
    <scope>NUCLEOTIDE SEQUENCE [LARGE SCALE GENOMIC DNA]</scope>
    <source>
        <strain>ATCC 700392 / 26695</strain>
    </source>
</reference>
<reference key="3">
    <citation type="journal article" date="2007" name="FEMS Microbiol. Lett.">
        <title>Bacterial factors that mediate colonization of the stomach and virulence of Helicobacter pylori.</title>
        <authorList>
            <person name="Clyne M."/>
            <person name="Dolan B."/>
            <person name="Reeves E.P."/>
        </authorList>
    </citation>
    <scope>REVIEW ON VIRULENCE OF H.PYLORI</scope>
</reference>
<protein>
    <recommendedName>
        <fullName evidence="1">Urease accessory protein UreE</fullName>
    </recommendedName>
</protein>
<feature type="chain" id="PRO_0000067633" description="Urease accessory protein UreE">
    <location>
        <begin position="1"/>
        <end position="170"/>
    </location>
</feature>
<feature type="sequence conflict" description="In Ref. 1; AAA25023." evidence="2" ref="1">
    <original>V</original>
    <variation>I</variation>
    <location>
        <position position="7"/>
    </location>
</feature>
<feature type="sequence conflict" description="In Ref. 1; AAA25023." evidence="2" ref="1">
    <original>H</original>
    <variation>Y</variation>
    <location>
        <position position="22"/>
    </location>
</feature>
<feature type="sequence conflict" description="In Ref. 1; AAA25023." evidence="2" ref="1">
    <original>I</original>
    <variation>V</variation>
    <location>
        <position position="47"/>
    </location>
</feature>
<feature type="sequence conflict" description="In Ref. 1; AAA25023." evidence="2" ref="1">
    <original>L</original>
    <variation>F</variation>
    <location>
        <position position="57"/>
    </location>
</feature>
<feature type="sequence conflict" description="In Ref. 1; AAA25023." evidence="2" ref="1">
    <original>V</original>
    <variation>M</variation>
    <location>
        <position position="169"/>
    </location>
</feature>
<feature type="helix" evidence="3">
    <location>
        <begin position="10"/>
        <end position="12"/>
    </location>
</feature>
<feature type="helix" evidence="3">
    <location>
        <begin position="15"/>
        <end position="17"/>
    </location>
</feature>
<feature type="strand" evidence="3">
    <location>
        <begin position="18"/>
        <end position="25"/>
    </location>
</feature>
<feature type="helix" evidence="3">
    <location>
        <begin position="27"/>
        <end position="29"/>
    </location>
</feature>
<feature type="strand" evidence="3">
    <location>
        <begin position="33"/>
        <end position="38"/>
    </location>
</feature>
<feature type="strand" evidence="3">
    <location>
        <begin position="44"/>
        <end position="48"/>
    </location>
</feature>
<feature type="strand" evidence="3">
    <location>
        <begin position="61"/>
        <end position="66"/>
    </location>
</feature>
<feature type="strand" evidence="3">
    <location>
        <begin position="69"/>
        <end position="75"/>
    </location>
</feature>
<feature type="strand" evidence="3">
    <location>
        <begin position="78"/>
        <end position="84"/>
    </location>
</feature>
<feature type="helix" evidence="3">
    <location>
        <begin position="88"/>
        <end position="100"/>
    </location>
</feature>
<feature type="strand" evidence="3">
    <location>
        <begin position="105"/>
        <end position="107"/>
    </location>
</feature>
<feature type="strand" evidence="3">
    <location>
        <begin position="113"/>
        <end position="117"/>
    </location>
</feature>
<feature type="helix" evidence="3">
    <location>
        <begin position="120"/>
        <end position="129"/>
    </location>
</feature>
<feature type="strand" evidence="3">
    <location>
        <begin position="132"/>
        <end position="138"/>
    </location>
</feature>
<feature type="helix" evidence="3">
    <location>
        <begin position="142"/>
        <end position="144"/>
    </location>
</feature>
<feature type="strand" evidence="4">
    <location>
        <begin position="152"/>
        <end position="154"/>
    </location>
</feature>
<name>UREE_HELPY</name>
<gene>
    <name evidence="1" type="primary">ureE</name>
    <name type="ordered locus">HP_0070</name>
</gene>
<accession>Q09064</accession>
<proteinExistence type="evidence at protein level"/>